<proteinExistence type="inferred from homology"/>
<sequence>MDIKLINIGFGNIVSANRIIAIVSPESAPIKRIITEARDRGMLIDATYGRRTRAVIITDSDHVILSAVQPETVANRLVSKEAAQVDEPTD</sequence>
<protein>
    <recommendedName>
        <fullName evidence="1">Putative regulatory protein Dred_1699</fullName>
    </recommendedName>
</protein>
<dbReference type="EMBL" id="CP000612">
    <property type="protein sequence ID" value="ABO50226.1"/>
    <property type="molecule type" value="Genomic_DNA"/>
</dbReference>
<dbReference type="SMR" id="A4J573"/>
<dbReference type="STRING" id="349161.Dred_1699"/>
<dbReference type="KEGG" id="drm:Dred_1699"/>
<dbReference type="eggNOG" id="COG2052">
    <property type="taxonomic scope" value="Bacteria"/>
</dbReference>
<dbReference type="HOGENOM" id="CLU_165326_0_0_9"/>
<dbReference type="OrthoDB" id="5432174at2"/>
<dbReference type="Proteomes" id="UP000001556">
    <property type="component" value="Chromosome"/>
</dbReference>
<dbReference type="HAMAP" id="MF_01503">
    <property type="entry name" value="RemA"/>
    <property type="match status" value="1"/>
</dbReference>
<dbReference type="InterPro" id="IPR007169">
    <property type="entry name" value="RemA-like"/>
</dbReference>
<dbReference type="NCBIfam" id="NF046064">
    <property type="entry name" value="MtxBflmRegRemA"/>
    <property type="match status" value="1"/>
</dbReference>
<dbReference type="NCBIfam" id="NF003315">
    <property type="entry name" value="PRK04323.1"/>
    <property type="match status" value="1"/>
</dbReference>
<dbReference type="PANTHER" id="PTHR38449:SF1">
    <property type="entry name" value="REGULATORY PROTEIN SSL2874-RELATED"/>
    <property type="match status" value="1"/>
</dbReference>
<dbReference type="PANTHER" id="PTHR38449">
    <property type="entry name" value="REGULATORY PROTEIN TM_1690-RELATED"/>
    <property type="match status" value="1"/>
</dbReference>
<dbReference type="Pfam" id="PF04025">
    <property type="entry name" value="RemA-like"/>
    <property type="match status" value="1"/>
</dbReference>
<comment type="similarity">
    <text evidence="1">Belongs to the RemA family.</text>
</comment>
<organism>
    <name type="scientific">Desulforamulus reducens (strain ATCC BAA-1160 / DSM 100696 / MI-1)</name>
    <name type="common">Desulfotomaculum reducens</name>
    <dbReference type="NCBI Taxonomy" id="349161"/>
    <lineage>
        <taxon>Bacteria</taxon>
        <taxon>Bacillati</taxon>
        <taxon>Bacillota</taxon>
        <taxon>Clostridia</taxon>
        <taxon>Eubacteriales</taxon>
        <taxon>Peptococcaceae</taxon>
        <taxon>Desulforamulus</taxon>
    </lineage>
</organism>
<evidence type="ECO:0000255" key="1">
    <source>
        <dbReference type="HAMAP-Rule" id="MF_01503"/>
    </source>
</evidence>
<gene>
    <name type="ordered locus">Dred_1699</name>
</gene>
<keyword id="KW-1185">Reference proteome</keyword>
<feature type="chain" id="PRO_1000087513" description="Putative regulatory protein Dred_1699">
    <location>
        <begin position="1"/>
        <end position="90"/>
    </location>
</feature>
<reference key="1">
    <citation type="submission" date="2007-03" db="EMBL/GenBank/DDBJ databases">
        <title>Complete sequence of Desulfotomaculum reducens MI-1.</title>
        <authorList>
            <consortium name="US DOE Joint Genome Institute"/>
            <person name="Copeland A."/>
            <person name="Lucas S."/>
            <person name="Lapidus A."/>
            <person name="Barry K."/>
            <person name="Detter J.C."/>
            <person name="Glavina del Rio T."/>
            <person name="Hammon N."/>
            <person name="Israni S."/>
            <person name="Dalin E."/>
            <person name="Tice H."/>
            <person name="Pitluck S."/>
            <person name="Sims D."/>
            <person name="Brettin T."/>
            <person name="Bruce D."/>
            <person name="Han C."/>
            <person name="Tapia R."/>
            <person name="Schmutz J."/>
            <person name="Larimer F."/>
            <person name="Land M."/>
            <person name="Hauser L."/>
            <person name="Kyrpides N."/>
            <person name="Kim E."/>
            <person name="Tebo B.M."/>
            <person name="Richardson P."/>
        </authorList>
    </citation>
    <scope>NUCLEOTIDE SEQUENCE [LARGE SCALE GENOMIC DNA]</scope>
    <source>
        <strain>ATCC BAA-1160 / DSM 100696 / MI-1</strain>
    </source>
</reference>
<accession>A4J573</accession>
<name>Y1699_DESRM</name>